<keyword id="KW-0014">AIDS</keyword>
<keyword id="KW-0053">Apoptosis</keyword>
<keyword id="KW-0244">Early protein</keyword>
<keyword id="KW-1032">Host cell membrane</keyword>
<keyword id="KW-1040">Host Golgi apparatus</keyword>
<keyword id="KW-1043">Host membrane</keyword>
<keyword id="KW-0945">Host-virus interaction</keyword>
<keyword id="KW-1080">Inhibition of host adaptive immune response by virus</keyword>
<keyword id="KW-1083">Inhibition of host autophagy by virus</keyword>
<keyword id="KW-1115">Inhibition of host MHC class I molecule presentation by virus</keyword>
<keyword id="KW-1116">Inhibition of host MHC class II molecule presentation by virus</keyword>
<keyword id="KW-0449">Lipoprotein</keyword>
<keyword id="KW-0472">Membrane</keyword>
<keyword id="KW-0519">Myristate</keyword>
<keyword id="KW-0597">Phosphoprotein</keyword>
<keyword id="KW-1185">Reference proteome</keyword>
<keyword id="KW-0964">Secreted</keyword>
<keyword id="KW-0729">SH3-binding</keyword>
<keyword id="KW-0899">Viral immunoevasion</keyword>
<keyword id="KW-0946">Virion</keyword>
<keyword id="KW-0843">Virulence</keyword>
<gene>
    <name evidence="1" type="primary">nef</name>
</gene>
<feature type="initiator methionine" description="Removed; by host" evidence="1">
    <location>
        <position position="1"/>
    </location>
</feature>
<feature type="chain" id="PRO_0000244809" description="Protein Nef" evidence="1">
    <location>
        <begin position="2"/>
        <end position="205"/>
    </location>
</feature>
<feature type="chain" id="PRO_0000244810" description="C-terminal core protein" evidence="1">
    <location>
        <begin position="58"/>
        <end position="205"/>
    </location>
</feature>
<feature type="region of interest" description="Acidic; interacts with host PACS1 and PACS2; stabilizes the interaction of NEF/MHC-I with host AP1M1; necessary for MHC-I internalization" evidence="1">
    <location>
        <begin position="62"/>
        <end position="65"/>
    </location>
</feature>
<feature type="region of interest" description="SH3-binding; interaction with Src family tyrosine kinases" evidence="1">
    <location>
        <begin position="69"/>
        <end position="78"/>
    </location>
</feature>
<feature type="region of interest" description="Mediates dimerization, Nef-PTE1 interaction" evidence="1">
    <location>
        <begin position="108"/>
        <end position="124"/>
    </location>
</feature>
<feature type="region of interest" description="Binding to ATP6V1H" evidence="1">
    <location>
        <begin position="148"/>
        <end position="180"/>
    </location>
</feature>
<feature type="short sequence motif" description="PxxP; stabilizes the interaction of NEF/MHC-I with host AP1M1; necessary for MHC-I internalization" evidence="1">
    <location>
        <begin position="72"/>
        <end position="75"/>
    </location>
</feature>
<feature type="short sequence motif" description="Dileucine internalization motif; necessary for CD4 internalization" evidence="1">
    <location>
        <begin position="164"/>
        <end position="165"/>
    </location>
</feature>
<feature type="short sequence motif" description="Diacidic; necessary for CD4 internalization" evidence="1">
    <location>
        <begin position="174"/>
        <end position="175"/>
    </location>
</feature>
<feature type="site" description="Might play a role in AP-1 recruitment to the Nef-MHC-I complex" evidence="1">
    <location>
        <position position="20"/>
    </location>
</feature>
<feature type="site" description="Cleavage; by viral protease" evidence="1">
    <location>
        <begin position="57"/>
        <end position="58"/>
    </location>
</feature>
<feature type="modified residue" description="Phosphoserine; by host" evidence="1">
    <location>
        <position position="6"/>
    </location>
</feature>
<feature type="lipid moiety-binding region" description="N-myristoyl glycine; by host" evidence="1">
    <location>
        <position position="2"/>
    </location>
</feature>
<proteinExistence type="inferred from homology"/>
<protein>
    <recommendedName>
        <fullName evidence="1">Protein Nef</fullName>
    </recommendedName>
    <alternativeName>
        <fullName evidence="1">3'ORF</fullName>
    </alternativeName>
    <alternativeName>
        <fullName evidence="1">Negative factor</fullName>
        <shortName evidence="1">F-protein</shortName>
    </alternativeName>
    <component>
        <recommendedName>
            <fullName evidence="1">C-terminal core protein</fullName>
        </recommendedName>
    </component>
</protein>
<sequence>MGGKWSKSSIVGWPAVGERMRQTPTAAEGVGAVSRDLDRRGAITSSNTRTTNPDLAWLEAQEEEEVGFPVRPQVPVRPMTYKAAVDLSHFLKEKGGLEGLIYSKKRGDTLDLWVYHTQGYFPDWQNYTPGPGIRYPLTLGWCFKLVPVDPEEVEKANEGENNCLLHPMSQHGMEDEDREVLRWKFDSSLALRHIARERHPEFYQD</sequence>
<reference key="1">
    <citation type="journal article" date="2000" name="Virology">
        <title>Virtually full-length subtype F and F/D recombinant HIV-1 from Africa and South America.</title>
        <authorList>
            <person name="Laukkanen T."/>
            <person name="Carr J.K."/>
            <person name="Janssens W."/>
            <person name="Liitsola K."/>
            <person name="Gotte D."/>
            <person name="McCutchan F.E."/>
            <person name="Op de Coul E."/>
            <person name="Cornelissen M."/>
            <person name="Heyndrickx L."/>
            <person name="van der Groen G."/>
            <person name="Salminen M.O."/>
        </authorList>
    </citation>
    <scope>NUCLEOTIDE SEQUENCE [GENOMIC DNA]</scope>
</reference>
<comment type="function">
    <text evidence="1">Factor of infectivity and pathogenicity, required for optimal virus replication. Alters numerous pathways of T-lymphocyte function and down-regulates immunity surface molecules in order to evade host defense and increase viral infectivity. Alters the functionality of other immunity cells, like dendritic cells, monocytes/macrophages and NK cells.</text>
</comment>
<comment type="function">
    <text evidence="1">In infected CD4(+) T-lymphocytes, down-regulates the surface MHC-I, mature MHC-II, CD4, CD28, CCR5 and CXCR4 molecules. Mediates internalization and degradation of host CD4 through the interaction of with the cytoplasmic tail of CD4, the recruitment of AP-2 (clathrin adapter protein complex 2), internalization through clathrin coated pits, and subsequent transport to endosomes and lysosomes for degradation. Diverts host MHC-I molecules to the trans-Golgi network-associated endosomal compartments by an endocytic pathway to finally target them for degradation. MHC-I down-regulation may involve AP-1 (clathrin adapter protein complex 1) or possibly Src family kinase-ZAP70/Syk-PI3K cascade recruited by PACS2. In consequence infected cells are masked for immune recognition by cytotoxic T-lymphocytes. Decreasing the number of immune receptors also prevents reinfection by more HIV particles (superinfection). Down-regulates host SERINC3 and SERINC5 thereby excluding these proteins from the viral particles. Virion infectivity is drastically higher when SERINC3 or SERINC5 are excluded from the viral envelope, because these host antiviral proteins impair the membrane fusion event necessary for subsequent virion penetration.</text>
</comment>
<comment type="function">
    <text evidence="1">Bypasses host T-cell signaling by inducing a transcriptional program nearly identical to that of anti-CD3 cell activation. Interaction with TCR-zeta chain up-regulates the Fas ligand (FasL). Increasing surface FasL molecules and decreasing surface MHC-I molecules on infected CD4(+) cells send attacking cytotoxic CD8+ T-lymphocytes into apoptosis.</text>
</comment>
<comment type="function">
    <text evidence="1">Plays a role in optimizing the host cell environment for viral replication without causing cell death by apoptosis. Protects the infected cells from apoptosis in order to keep them alive until the next virus generation is ready to strike. Inhibits the Fas and TNFR-mediated death signals by blocking MAP3K5/ASK1. Decreases the half-life of TP53, protecting the infected cell against p53-mediated apoptosis. Inhibits the apoptotic signals regulated by the Bcl-2 family proteins through the formation of a Nef/PI3-kinase/PAK2 complex that leads to activation of PAK2 and induces phosphorylation of host BAD.</text>
</comment>
<comment type="function">
    <text evidence="1">Extracellular Nef protein targets CD4(+) T-lymphocytes for apoptosis by interacting with CXCR4 surface receptors.</text>
</comment>
<comment type="subunit">
    <text evidence="1">Monomer; cytosolic form. Homodimer; membrane bound form. Interacts with Nef associated p21-activated kinase (PAK2); this interaction activates PAK2. Associates with the Nef-MHC-I-AP1 complex; this complex is required for MHC-I internalization. Interacts (via C-terminus) with host PI3-kinase. Interacts with host PACS1; this interaction seems to be weak. Interacts with host PACS2. Interacts with host LCK and MAPK3; these interactions inhibit the kinase activity of the latter. Interacts with host ATP6V1H; this interaction may play a role in CD4 endocytosis. Associates with the CD4-Nef-AP2 complex; this complex is required for CD4 internalization. Interacts with host AP2 subunit alpha and AP2 subunit sigma2. Interacts with TCR-zeta chain; this interaction up-regulates the Fas ligand (FasL) surface expression. Interacts with host HCK, LYN, and SRC; these interactions activate the Src family kinases. Interacts with MAP3K5; this interaction inhibits the Fas and TNFR-mediated death signals. Interacts with beta-COP and PTE1. Interacts with human RACK1; this increases Nef phosphorylation by PKC. Interacts with TP53; this interaction decreases the half-life of TP53, protecting the infected cell against p53-mediated apoptosis.</text>
</comment>
<comment type="subcellular location">
    <subcellularLocation>
        <location evidence="1">Host cell membrane</location>
        <topology evidence="1">Lipid-anchor</topology>
        <orientation evidence="1">Cytoplasmic side</orientation>
    </subcellularLocation>
    <subcellularLocation>
        <location evidence="1">Virion</location>
    </subcellularLocation>
    <subcellularLocation>
        <location evidence="1">Secreted</location>
    </subcellularLocation>
    <subcellularLocation>
        <location evidence="1">Host Golgi apparatus membrane</location>
    </subcellularLocation>
    <text evidence="1">TGN localization requires PACS1. Associates with the inner plasma membrane through its N-terminal domain. Nef stimulates its own export via the release of exosomes. Incorporated in virions at a rate of about 10 molecules per virion, where it is cleaved.</text>
</comment>
<comment type="induction">
    <text evidence="1">Expressed early in the viral replication cycle.</text>
</comment>
<comment type="domain">
    <text evidence="1">The N-terminal domain is composed of the N-myristoyl glycine and of a cluster of positively charged amino acids. It is required for inner plasma membrane targeting of Nef and virion incorporation, and thereby for infectivity. This domain is also involved in binding to TP53.</text>
</comment>
<comment type="domain">
    <text evidence="1">The SH3-binding domain constituted of PxxP motifs mediates binding to several Src family proteins thereby regulating their tyrosine kinase activity. The same motifs also mediates the association with MAPK3, PI3-kinase and TCR-zeta.</text>
</comment>
<comment type="domain">
    <text evidence="1">The dileucine internalization motif and a diacidic motif seem to be required for binding to AP-2.</text>
</comment>
<comment type="domain">
    <text evidence="1">The acidic region binds to the sorting protein PACS-2, which targets Nef to the paranuclear region, enabling the PxxP motif to direct assembly of an SFK/ZAP-70/PI3K complex that accelerates endocytosis of cell-surface MHC-I.</text>
</comment>
<comment type="PTM">
    <text evidence="1">The virion-associated Nef proteins are cleaved by the viral protease to release the soluble C-terminal core protein. Nef is probably cleaved concomitantly with viral structural proteins on maturation of virus particles.</text>
</comment>
<comment type="PTM">
    <text evidence="1">Myristoylated.</text>
</comment>
<comment type="PTM">
    <text evidence="1">Phosphorylated on serine residues, probably by host PKCdelta and theta.</text>
</comment>
<comment type="miscellaneous">
    <text evidence="1">HIV-1 lineages are divided in three main groups, M (for Major), O (for Outlier), and N (for New, or Non-M, Non-O). The vast majority of strains found worldwide belong to the group M. Group O seems to be endemic to and largely confined to Cameroon and neighboring countries in West Central Africa, where these viruses represent a small minority of HIV-1 strains. The group N is represented by a limited number of isolates from Cameroonian persons. The group M is further subdivided in 9 clades or subtypes (A to D, F to H, J and K).</text>
</comment>
<comment type="similarity">
    <text evidence="1">Belongs to the lentivirus primate group Nef protein family.</text>
</comment>
<evidence type="ECO:0000255" key="1">
    <source>
        <dbReference type="HAMAP-Rule" id="MF_04078"/>
    </source>
</evidence>
<organism>
    <name type="scientific">Human immunodeficiency virus type 1 group M subtype F1 (isolate VI850)</name>
    <name type="common">HIV-1</name>
    <dbReference type="NCBI Taxonomy" id="388813"/>
    <lineage>
        <taxon>Viruses</taxon>
        <taxon>Riboviria</taxon>
        <taxon>Pararnavirae</taxon>
        <taxon>Artverviricota</taxon>
        <taxon>Revtraviricetes</taxon>
        <taxon>Ortervirales</taxon>
        <taxon>Retroviridae</taxon>
        <taxon>Orthoretrovirinae</taxon>
        <taxon>Lentivirus</taxon>
        <taxon>Human immunodeficiency virus type 1</taxon>
    </lineage>
</organism>
<dbReference type="EMBL" id="AF077336">
    <property type="protein sequence ID" value="AAD46095.1"/>
    <property type="molecule type" value="Genomic_DNA"/>
</dbReference>
<dbReference type="SMR" id="Q9QSQ6"/>
<dbReference type="Proteomes" id="UP000007418">
    <property type="component" value="Segment"/>
</dbReference>
<dbReference type="GO" id="GO:0005576">
    <property type="term" value="C:extracellular region"/>
    <property type="evidence" value="ECO:0007669"/>
    <property type="project" value="UniProtKB-SubCell"/>
</dbReference>
<dbReference type="GO" id="GO:0044178">
    <property type="term" value="C:host cell Golgi membrane"/>
    <property type="evidence" value="ECO:0007669"/>
    <property type="project" value="UniProtKB-SubCell"/>
</dbReference>
<dbReference type="GO" id="GO:0020002">
    <property type="term" value="C:host cell plasma membrane"/>
    <property type="evidence" value="ECO:0007669"/>
    <property type="project" value="UniProtKB-SubCell"/>
</dbReference>
<dbReference type="GO" id="GO:0016020">
    <property type="term" value="C:membrane"/>
    <property type="evidence" value="ECO:0007669"/>
    <property type="project" value="UniProtKB-UniRule"/>
</dbReference>
<dbReference type="GO" id="GO:0044423">
    <property type="term" value="C:virion component"/>
    <property type="evidence" value="ECO:0007669"/>
    <property type="project" value="UniProtKB-UniRule"/>
</dbReference>
<dbReference type="GO" id="GO:0005525">
    <property type="term" value="F:GTP binding"/>
    <property type="evidence" value="ECO:0007669"/>
    <property type="project" value="UniProtKB-UniRule"/>
</dbReference>
<dbReference type="GO" id="GO:0017124">
    <property type="term" value="F:SH3 domain binding"/>
    <property type="evidence" value="ECO:0007669"/>
    <property type="project" value="UniProtKB-UniRule"/>
</dbReference>
<dbReference type="GO" id="GO:0046776">
    <property type="term" value="P:symbiont-mediated suppression of host antigen processing and presentation of peptide antigen via MHC class I"/>
    <property type="evidence" value="ECO:0007669"/>
    <property type="project" value="UniProtKB-UniRule"/>
</dbReference>
<dbReference type="GO" id="GO:0039505">
    <property type="term" value="P:symbiont-mediated suppression of host antigen processing and presentation of peptide antigen via MHC class II"/>
    <property type="evidence" value="ECO:0007669"/>
    <property type="project" value="UniProtKB-UniRule"/>
</dbReference>
<dbReference type="GO" id="GO:0140321">
    <property type="term" value="P:symbiont-mediated suppression of host autophagy"/>
    <property type="evidence" value="ECO:0007669"/>
    <property type="project" value="UniProtKB-KW"/>
</dbReference>
<dbReference type="Gene3D" id="4.10.890.10">
    <property type="entry name" value="HIV 1 nef anchor domain"/>
    <property type="match status" value="1"/>
</dbReference>
<dbReference type="Gene3D" id="3.30.62.10">
    <property type="entry name" value="Nef Regulatory Factor"/>
    <property type="match status" value="1"/>
</dbReference>
<dbReference type="HAMAP" id="MF_04078">
    <property type="entry name" value="NEF_HIV"/>
    <property type="match status" value="1"/>
</dbReference>
<dbReference type="InterPro" id="IPR027480">
    <property type="entry name" value="HIV-1_Nef_anchor_sf"/>
</dbReference>
<dbReference type="InterPro" id="IPR027481">
    <property type="entry name" value="HIV-1_Nef_core_sf"/>
</dbReference>
<dbReference type="InterPro" id="IPR001558">
    <property type="entry name" value="HIV_Nef"/>
</dbReference>
<dbReference type="Pfam" id="PF00469">
    <property type="entry name" value="F-protein"/>
    <property type="match status" value="1"/>
</dbReference>
<dbReference type="SUPFAM" id="SSF55671">
    <property type="entry name" value="Regulatory factor Nef"/>
    <property type="match status" value="1"/>
</dbReference>
<accession>Q9QSQ6</accession>
<organismHost>
    <name type="scientific">Homo sapiens</name>
    <name type="common">Human</name>
    <dbReference type="NCBI Taxonomy" id="9606"/>
</organismHost>
<name>NEF_HV1VI</name>